<sequence length="1824" mass="201945">MASQNVVFAIDVDYRPEGTQNTTNAYQDHLKQWILRVLLSLGHRYGLEKVRWGYKFFNSRTVKSATLITRGSDFKELQEKVFSDFEEELHVKFTTEGKSPRSQEKSHKLKPSPACCVQNALKEILLDFQWDRPDLTSPTKVTLRPRRSSRSGRNIPLQDCDMLSVDKNVLFVVSECPRSKAELEDYLSMRREDSRHHKDINEQMLPKGLIDMLMQRNVVLHWADSGVFKADHVAKDYTGIETLMERLGLVGGQVVPMLSPCLPLMDQHPKMNSLLALGVDAFPIDSTNSYLHLSKRMQQQLFPPLGASFSWIADGTKRSCNVTLEPVSYRQRSLRAPVDVLLKGVLQSLDILSLSHSAIETWILQCPDAELGQEAFQHLKQLSTGGHAMLAEVSEGDVVCSAVLSVLSSCTAQITVLQPLLAQEGQLLPADLVSLDTTDISGDLPDVVSSVLSVMYDIMEEDDCSDHEKMPLVPDWANQELKQQSSSRSNGMVEGWFPLSDQSGISCHLMESMRLLHAAPEEKEKGEEYSDTQQEITSSLSEFYQSSTAGSSGSLRSKKRGTQCTPVRQKMKTMSRSLQMLNFARLNVKAQKTQGDSGSAGSGKGTEKGGKKSSGDRTKPGLLHFSSEEELLSHLGLTYQKAVENRTMSVPSQVQDLLSVVKSFLKSNTEASLLNLVQKHVLKSCQSIRQHYGNSSDDESKIRECQLQAVLRLELCKQTEQEDEEVVEQRVEDVADMLRNISRSKDAVYLSRFMQEEVLPLYMNSIPKVLADVYHSLGTQLPEALVAVLPSDFFSDESLAKDSVSVSLSSFSATQSNISSVGDHLEELRNRSAKKRRQSMITRHKSMTEAPQALRQIEMPRKSTRLAKPKLCVPIEKTAVEQPPLPKQPVQEVTKVRRNLFNQVTVSPSKKSKMPRSQSVSAVEGIKKRKRSDVDNDDRHTLLTKKVSETPLHKQVSSRLLHRQRTGRKSGESDVCIIEESPIKPAADLRRSPRIKSLTRRHSSVFYSSSQPRSRNLDRVVSSSQLSHSEGKGKFSVSSVRSPVRLLFGATQSPGRLRHTTVSSLEDQASKGLPLRCSSFENQNKTPQKLRSDALASAVGCRTPQSPRTPNRTVGDNGMALRGSPFQSPAAKSIVVETPMKSPLKGILKTPIKKSLLDCVSPNGAWLRSPGCKTPKKCVTWSPSPRKPVPENQVNVPDSPVFAKRHSPRLVTPGKNSSPEEKIVFKTPDKVPQRKSKTSPEIILRRLEIPVNIDPETCKSITRSGKIRTLSLPYKTSKGSDEFLPQSESGSFPFCNSPLKPNIQKTIQSPIPTHRMCTRSGNTPVKESCSPSSNSQGITGTSPSPRKSLSSAVAKSSPSPSFGPSRSGVGNQNNSSISNVEKHTDDDKIIVQNKANDEKAEEASSSDSQQFDCSEFSITTDDESIDISEAAVVKTQLVGGIKMNIAFSRKPSKSDVFEFEGKQTTSTGTPLTRSYGFRQTPDRRQREAEARLGYSSGKPKISTPRTRRTPACGKQSSPQPLTYEVEMEMQASGLPKLKLRRTDSFNAGDLPSSATKGMTSHLVHRNKTNLKAPQIDSPLVQSSRHPGCISPSLCSRATPAKGTPGKGVQTYICQSITPTHHPTSSQSPLASPLTPSPQSRGWPTPENLNSWPRKKRARIETCGNKEQVIKGVPLLEKTGVIEDPELEGIFRIQGVEELKESLSTPISQRKLGLRSSQVMDHQGSPEGMDWTETMAQMCDAKDSTKTEQFAWMGRKVDTPKVKKQVSASGIFALTQSPLLYKKSAVIKEATQFSGSKSELEISPLCQPRRRRTPSRTYSRKKLLD</sequence>
<protein>
    <recommendedName>
        <fullName>Treslin</fullName>
    </recommendedName>
    <alternativeName>
        <fullName>TopBP1-interacting checkpoint and replication regulator</fullName>
    </alternativeName>
    <alternativeName>
        <fullName>TopBP1-interacting, replication-stimulating protein</fullName>
    </alternativeName>
</protein>
<gene>
    <name type="primary">ticrr</name>
</gene>
<dbReference type="EMBL" id="AY648745">
    <property type="protein sequence ID" value="AAT68063.1"/>
    <property type="molecule type" value="mRNA"/>
</dbReference>
<dbReference type="RefSeq" id="NP_001003887.1">
    <property type="nucleotide sequence ID" value="NM_001003887.1"/>
</dbReference>
<dbReference type="FunCoup" id="Q6DRL4">
    <property type="interactions" value="2156"/>
</dbReference>
<dbReference type="GeneID" id="445411"/>
<dbReference type="KEGG" id="dre:445411"/>
<dbReference type="AGR" id="ZFIN:ZDB-GENE-040728-1"/>
<dbReference type="CTD" id="90381"/>
<dbReference type="ZFIN" id="ZDB-GENE-040728-1">
    <property type="gene designation" value="ticrr"/>
</dbReference>
<dbReference type="InParanoid" id="Q6DRL4"/>
<dbReference type="OrthoDB" id="5812172at2759"/>
<dbReference type="PhylomeDB" id="Q6DRL4"/>
<dbReference type="PRO" id="PR:Q6DRL4"/>
<dbReference type="Proteomes" id="UP000000437">
    <property type="component" value="Chromosome 25"/>
</dbReference>
<dbReference type="GO" id="GO:0005634">
    <property type="term" value="C:nucleus"/>
    <property type="evidence" value="ECO:0000250"/>
    <property type="project" value="UniProtKB"/>
</dbReference>
<dbReference type="GO" id="GO:0003682">
    <property type="term" value="F:chromatin binding"/>
    <property type="evidence" value="ECO:0000250"/>
    <property type="project" value="UniProtKB"/>
</dbReference>
<dbReference type="GO" id="GO:0006281">
    <property type="term" value="P:DNA repair"/>
    <property type="evidence" value="ECO:0000315"/>
    <property type="project" value="UniProtKB"/>
</dbReference>
<dbReference type="GO" id="GO:0006260">
    <property type="term" value="P:DNA replication"/>
    <property type="evidence" value="ECO:0000315"/>
    <property type="project" value="UniProtKB"/>
</dbReference>
<dbReference type="GO" id="GO:0033314">
    <property type="term" value="P:mitotic DNA replication checkpoint signaling"/>
    <property type="evidence" value="ECO:0000315"/>
    <property type="project" value="UniProtKB"/>
</dbReference>
<dbReference type="GO" id="GO:0007095">
    <property type="term" value="P:mitotic G2 DNA damage checkpoint signaling"/>
    <property type="evidence" value="ECO:0000315"/>
    <property type="project" value="UniProtKB"/>
</dbReference>
<dbReference type="GO" id="GO:0030174">
    <property type="term" value="P:regulation of DNA-templated DNA replication initiation"/>
    <property type="evidence" value="ECO:0000250"/>
    <property type="project" value="UniProtKB"/>
</dbReference>
<dbReference type="GO" id="GO:0010212">
    <property type="term" value="P:response to ionizing radiation"/>
    <property type="evidence" value="ECO:0000315"/>
    <property type="project" value="UniProtKB"/>
</dbReference>
<dbReference type="InterPro" id="IPR026153">
    <property type="entry name" value="Treslin"/>
</dbReference>
<dbReference type="InterPro" id="IPR032746">
    <property type="entry name" value="Treslin_M"/>
</dbReference>
<dbReference type="InterPro" id="IPR053919">
    <property type="entry name" value="Treslin_N"/>
</dbReference>
<dbReference type="InterPro" id="IPR053920">
    <property type="entry name" value="Treslin_STD"/>
</dbReference>
<dbReference type="PANTHER" id="PTHR21556">
    <property type="entry name" value="TRESLIN"/>
    <property type="match status" value="1"/>
</dbReference>
<dbReference type="PANTHER" id="PTHR21556:SF2">
    <property type="entry name" value="TRESLIN"/>
    <property type="match status" value="1"/>
</dbReference>
<dbReference type="Pfam" id="PF15292">
    <property type="entry name" value="Treslin_M"/>
    <property type="match status" value="1"/>
</dbReference>
<dbReference type="Pfam" id="PF21854">
    <property type="entry name" value="Treslin_N"/>
    <property type="match status" value="1"/>
</dbReference>
<dbReference type="Pfam" id="PF21855">
    <property type="entry name" value="Treslin_STD"/>
    <property type="match status" value="1"/>
</dbReference>
<proteinExistence type="evidence at transcript level"/>
<evidence type="ECO:0000250" key="1"/>
<evidence type="ECO:0000250" key="2">
    <source>
        <dbReference type="UniProtKB" id="Q7Z2Z1"/>
    </source>
</evidence>
<evidence type="ECO:0000256" key="3">
    <source>
        <dbReference type="SAM" id="MobiDB-lite"/>
    </source>
</evidence>
<evidence type="ECO:0000269" key="4">
    <source>
    </source>
</evidence>
<evidence type="ECO:0000305" key="5"/>
<name>TICRR_DANRE</name>
<comment type="function">
    <text evidence="4">Regulator of DNA replication and S/M and G2/M checkpoints. Regulates the triggering of DNA replication initiation via its interaction with topbp1 by participating in cdk2-mediated loading of cdc45l onto replication origins. Required for the transition from pre-replication complex (pre-RC) to pre-initiation complex (pre-IC). Required to prevent mitotic entry after treatment with ionizing radiation.</text>
</comment>
<comment type="subunit">
    <text evidence="1 2">Interacts with topbp1 (via BRCT domains); interaction takes place in a cdk2-dependent manner (By similarity). Component of the replisome complex (By similarity).</text>
</comment>
<comment type="subcellular location">
    <subcellularLocation>
        <location evidence="1">Nucleus</location>
    </subcellularLocation>
    <text>Associates with chromatin.</text>
</comment>
<comment type="disruption phenotype">
    <text evidence="4">Embryonic lethality, due to impaired S-phase progression and disruption of the S/M checkpoint, leading to premature mitotic entry and mitotic catastrophe.</text>
</comment>
<comment type="similarity">
    <text evidence="5">Belongs to the treslin family.</text>
</comment>
<feature type="chain" id="PRO_0000391874" description="Treslin">
    <location>
        <begin position="1"/>
        <end position="1824"/>
    </location>
</feature>
<feature type="region of interest" description="Disordered" evidence="3">
    <location>
        <begin position="542"/>
        <end position="572"/>
    </location>
</feature>
<feature type="region of interest" description="Disordered" evidence="3">
    <location>
        <begin position="590"/>
        <end position="622"/>
    </location>
</feature>
<feature type="region of interest" description="Disordered" evidence="3">
    <location>
        <begin position="907"/>
        <end position="973"/>
    </location>
</feature>
<feature type="region of interest" description="Disordered" evidence="3">
    <location>
        <begin position="1001"/>
        <end position="1035"/>
    </location>
</feature>
<feature type="region of interest" description="Disordered" evidence="3">
    <location>
        <begin position="1098"/>
        <end position="1117"/>
    </location>
</feature>
<feature type="region of interest" description="Disordered" evidence="3">
    <location>
        <begin position="1189"/>
        <end position="1221"/>
    </location>
</feature>
<feature type="region of interest" description="Disordered" evidence="3">
    <location>
        <begin position="1293"/>
        <end position="1388"/>
    </location>
</feature>
<feature type="region of interest" description="Disordered" evidence="3">
    <location>
        <begin position="1459"/>
        <end position="1518"/>
    </location>
</feature>
<feature type="region of interest" description="Disordered" evidence="3">
    <location>
        <begin position="1617"/>
        <end position="1650"/>
    </location>
</feature>
<feature type="region of interest" description="Disordered" evidence="3">
    <location>
        <begin position="1803"/>
        <end position="1824"/>
    </location>
</feature>
<feature type="compositionally biased region" description="Low complexity" evidence="3">
    <location>
        <begin position="546"/>
        <end position="555"/>
    </location>
</feature>
<feature type="compositionally biased region" description="Polar residues" evidence="3">
    <location>
        <begin position="562"/>
        <end position="572"/>
    </location>
</feature>
<feature type="compositionally biased region" description="Basic and acidic residues" evidence="3">
    <location>
        <begin position="605"/>
        <end position="619"/>
    </location>
</feature>
<feature type="compositionally biased region" description="Polar residues" evidence="3">
    <location>
        <begin position="907"/>
        <end position="921"/>
    </location>
</feature>
<feature type="compositionally biased region" description="Basic and acidic residues" evidence="3">
    <location>
        <begin position="932"/>
        <end position="952"/>
    </location>
</feature>
<feature type="compositionally biased region" description="Polar residues" evidence="3">
    <location>
        <begin position="1005"/>
        <end position="1014"/>
    </location>
</feature>
<feature type="compositionally biased region" description="Polar residues" evidence="3">
    <location>
        <begin position="1103"/>
        <end position="1114"/>
    </location>
</feature>
<feature type="compositionally biased region" description="Polar residues" evidence="3">
    <location>
        <begin position="1319"/>
        <end position="1345"/>
    </location>
</feature>
<feature type="compositionally biased region" description="Low complexity" evidence="3">
    <location>
        <begin position="1347"/>
        <end position="1370"/>
    </location>
</feature>
<feature type="compositionally biased region" description="Polar residues" evidence="3">
    <location>
        <begin position="1462"/>
        <end position="1472"/>
    </location>
</feature>
<feature type="compositionally biased region" description="Basic and acidic residues" evidence="3">
    <location>
        <begin position="1480"/>
        <end position="1490"/>
    </location>
</feature>
<feature type="compositionally biased region" description="Polar residues" evidence="3">
    <location>
        <begin position="1617"/>
        <end position="1629"/>
    </location>
</feature>
<feature type="compositionally biased region" description="Polar residues" evidence="3">
    <location>
        <begin position="1636"/>
        <end position="1650"/>
    </location>
</feature>
<feature type="compositionally biased region" description="Basic residues" evidence="3">
    <location>
        <begin position="1807"/>
        <end position="1824"/>
    </location>
</feature>
<reference key="1">
    <citation type="journal article" date="2004" name="Proc. Natl. Acad. Sci. U.S.A.">
        <title>Identification of 315 genes essential for early zebrafish development.</title>
        <authorList>
            <person name="Amsterdam A."/>
            <person name="Nissen R.M."/>
            <person name="Sun Z."/>
            <person name="Swindell E.C."/>
            <person name="Farrington S."/>
            <person name="Hopkins N."/>
        </authorList>
    </citation>
    <scope>NUCLEOTIDE SEQUENCE [LARGE SCALE MRNA]</scope>
    <source>
        <tissue>Embryo</tissue>
    </source>
</reference>
<reference key="2">
    <citation type="journal article" date="2010" name="Genes Dev.">
        <title>A vertebrate gene, ticrr, is an essential checkpoint and replication regulator.</title>
        <authorList>
            <person name="Sansam C.L."/>
            <person name="Cruz N.M."/>
            <person name="Danielian P.S."/>
            <person name="Amsterdam A."/>
            <person name="Lau M.L."/>
            <person name="Hopkins N."/>
            <person name="Lees J.A."/>
        </authorList>
    </citation>
    <scope>FUNCTION</scope>
    <scope>DISRUPTION PHENOTYPE</scope>
</reference>
<keyword id="KW-0131">Cell cycle</keyword>
<keyword id="KW-0227">DNA damage</keyword>
<keyword id="KW-0234">DNA repair</keyword>
<keyword id="KW-0539">Nucleus</keyword>
<keyword id="KW-1185">Reference proteome</keyword>
<organism>
    <name type="scientific">Danio rerio</name>
    <name type="common">Zebrafish</name>
    <name type="synonym">Brachydanio rerio</name>
    <dbReference type="NCBI Taxonomy" id="7955"/>
    <lineage>
        <taxon>Eukaryota</taxon>
        <taxon>Metazoa</taxon>
        <taxon>Chordata</taxon>
        <taxon>Craniata</taxon>
        <taxon>Vertebrata</taxon>
        <taxon>Euteleostomi</taxon>
        <taxon>Actinopterygii</taxon>
        <taxon>Neopterygii</taxon>
        <taxon>Teleostei</taxon>
        <taxon>Ostariophysi</taxon>
        <taxon>Cypriniformes</taxon>
        <taxon>Danionidae</taxon>
        <taxon>Danioninae</taxon>
        <taxon>Danio</taxon>
    </lineage>
</organism>
<accession>Q6DRL4</accession>